<organism evidence="16">
    <name type="scientific">Streptomyces coelicolor (strain ATCC BAA-471 / A3(2) / M145)</name>
    <dbReference type="NCBI Taxonomy" id="100226"/>
    <lineage>
        <taxon>Bacteria</taxon>
        <taxon>Bacillati</taxon>
        <taxon>Actinomycetota</taxon>
        <taxon>Actinomycetes</taxon>
        <taxon>Kitasatosporales</taxon>
        <taxon>Streptomycetaceae</taxon>
        <taxon>Streptomyces</taxon>
        <taxon>Streptomyces albidoflavus group</taxon>
    </lineage>
</organism>
<dbReference type="EC" id="6.3.1.-" evidence="8"/>
<dbReference type="EMBL" id="AL939109">
    <property type="protein sequence ID" value="CAA20824.1"/>
    <property type="molecule type" value="Genomic_DNA"/>
</dbReference>
<dbReference type="PIR" id="T36848">
    <property type="entry name" value="T36848"/>
</dbReference>
<dbReference type="RefSeq" id="NP_625889.1">
    <property type="nucleotide sequence ID" value="NC_003888.3"/>
</dbReference>
<dbReference type="SMR" id="O88070"/>
<dbReference type="FunCoup" id="O88070">
    <property type="interactions" value="241"/>
</dbReference>
<dbReference type="STRING" id="100226.gene:17759206"/>
<dbReference type="PaxDb" id="100226-SCO1613"/>
<dbReference type="KEGG" id="sco:SCO1613"/>
<dbReference type="PATRIC" id="fig|100226.15.peg.1625"/>
<dbReference type="eggNOG" id="COG0174">
    <property type="taxonomic scope" value="Bacteria"/>
</dbReference>
<dbReference type="HOGENOM" id="CLU_017290_0_3_11"/>
<dbReference type="InParanoid" id="O88070"/>
<dbReference type="OrthoDB" id="9807095at2"/>
<dbReference type="PhylomeDB" id="O88070"/>
<dbReference type="UniPathway" id="UPA00560"/>
<dbReference type="Proteomes" id="UP000001973">
    <property type="component" value="Chromosome"/>
</dbReference>
<dbReference type="GO" id="GO:0016880">
    <property type="term" value="F:acid-ammonia (or amide) ligase activity"/>
    <property type="evidence" value="ECO:0000314"/>
    <property type="project" value="UniProtKB"/>
</dbReference>
<dbReference type="GO" id="GO:0005524">
    <property type="term" value="F:ATP binding"/>
    <property type="evidence" value="ECO:0000250"/>
    <property type="project" value="UniProtKB"/>
</dbReference>
<dbReference type="GO" id="GO:0004356">
    <property type="term" value="F:glutamine synthetase activity"/>
    <property type="evidence" value="ECO:0007669"/>
    <property type="project" value="InterPro"/>
</dbReference>
<dbReference type="GO" id="GO:0016874">
    <property type="term" value="F:ligase activity"/>
    <property type="evidence" value="ECO:0000314"/>
    <property type="project" value="UniProtKB"/>
</dbReference>
<dbReference type="GO" id="GO:0000287">
    <property type="term" value="F:magnesium ion binding"/>
    <property type="evidence" value="ECO:0000250"/>
    <property type="project" value="UniProtKB"/>
</dbReference>
<dbReference type="GO" id="GO:0046336">
    <property type="term" value="P:ethanolamine catabolic process"/>
    <property type="evidence" value="ECO:0000314"/>
    <property type="project" value="UniProtKB"/>
</dbReference>
<dbReference type="GO" id="GO:0006536">
    <property type="term" value="P:glutamate metabolic process"/>
    <property type="evidence" value="ECO:0000314"/>
    <property type="project" value="UniProtKB"/>
</dbReference>
<dbReference type="GO" id="GO:0006542">
    <property type="term" value="P:glutamine biosynthetic process"/>
    <property type="evidence" value="ECO:0007669"/>
    <property type="project" value="InterPro"/>
</dbReference>
<dbReference type="GO" id="GO:0090549">
    <property type="term" value="P:response to carbon starvation"/>
    <property type="evidence" value="ECO:0000270"/>
    <property type="project" value="UniProtKB"/>
</dbReference>
<dbReference type="GO" id="GO:0090548">
    <property type="term" value="P:response to nitrate starvation"/>
    <property type="evidence" value="ECO:0000270"/>
    <property type="project" value="UniProtKB"/>
</dbReference>
<dbReference type="FunFam" id="3.30.590.10:FF:000005">
    <property type="entry name" value="Probable glutamine synthetase"/>
    <property type="match status" value="1"/>
</dbReference>
<dbReference type="FunFam" id="3.10.20.70:FF:000015">
    <property type="entry name" value="Putative glutamine synthetase"/>
    <property type="match status" value="1"/>
</dbReference>
<dbReference type="Gene3D" id="3.10.20.70">
    <property type="entry name" value="Glutamine synthetase, N-terminal domain"/>
    <property type="match status" value="1"/>
</dbReference>
<dbReference type="Gene3D" id="3.30.590.10">
    <property type="entry name" value="Glutamine synthetase/guanido kinase, catalytic domain"/>
    <property type="match status" value="1"/>
</dbReference>
<dbReference type="InterPro" id="IPR008147">
    <property type="entry name" value="Gln_synt_N"/>
</dbReference>
<dbReference type="InterPro" id="IPR036651">
    <property type="entry name" value="Gln_synt_N_sf"/>
</dbReference>
<dbReference type="InterPro" id="IPR014746">
    <property type="entry name" value="Gln_synth/guanido_kin_cat_dom"/>
</dbReference>
<dbReference type="InterPro" id="IPR008146">
    <property type="entry name" value="Gln_synth_cat_dom"/>
</dbReference>
<dbReference type="PANTHER" id="PTHR43785">
    <property type="entry name" value="GAMMA-GLUTAMYLPUTRESCINE SYNTHETASE"/>
    <property type="match status" value="1"/>
</dbReference>
<dbReference type="PANTHER" id="PTHR43785:SF12">
    <property type="entry name" value="TYPE-1 GLUTAMINE SYNTHETASE 2"/>
    <property type="match status" value="1"/>
</dbReference>
<dbReference type="Pfam" id="PF00120">
    <property type="entry name" value="Gln-synt_C"/>
    <property type="match status" value="1"/>
</dbReference>
<dbReference type="SMART" id="SM01230">
    <property type="entry name" value="Gln-synt_C"/>
    <property type="match status" value="1"/>
</dbReference>
<dbReference type="SUPFAM" id="SSF54368">
    <property type="entry name" value="Glutamine synthetase, N-terminal domain"/>
    <property type="match status" value="1"/>
</dbReference>
<dbReference type="SUPFAM" id="SSF55931">
    <property type="entry name" value="Glutamine synthetase/guanido kinase"/>
    <property type="match status" value="1"/>
</dbReference>
<dbReference type="PROSITE" id="PS51986">
    <property type="entry name" value="GS_BETA_GRASP"/>
    <property type="match status" value="1"/>
</dbReference>
<dbReference type="PROSITE" id="PS51987">
    <property type="entry name" value="GS_CATALYTIC"/>
    <property type="match status" value="1"/>
</dbReference>
<sequence>MSPGQKEALPVADRTPPLGVEELHALVAAGDIDTVVLAFPDMQGRLQGKRFAARFFLDEVLEHGTEGCNYLLAVDADMNTVDGYAMSSWDRGYGDFAMRADPATLRRLPWNEGTAMAVADLAWEDGSPVLAAPRQILRRQLERLAGHGYTAQVGTELEFIVFRDTYEHAWDANYRGLTPANQYNVDYSVLGTGRVEPLLRRIRNEMAGAGLTVESAKGECNPGQHEIAFRYDEALVTCDQHAVYKTGAKEIAAQEGMSLTFMAKYNELEGNSCHIHLSLADADGRNAMAEGGGMSDVMRHFLAGQLVALREFSLLYAPHINSYKRFQPGSFAPTAVAWGHDNRTCALRVVGHGRSLRFENRLPGGDVNPYLAVAGLVAAGLHGIEQRLELPEPCPGNAYTADFAHVPTTLREAAELWENSTLAKAAFGDEVVAHYRNMARVELDAFDAAVTDWELRRSFERM</sequence>
<proteinExistence type="evidence at protein level"/>
<gene>
    <name evidence="10 11 12 13" type="primary">glnA4</name>
    <name evidence="10 11 12 13 15" type="ordered locus">SCO1613</name>
</gene>
<name>GLNA4_STRCO</name>
<accession>O88070</accession>
<keyword id="KW-0067">ATP-binding</keyword>
<keyword id="KW-0436">Ligase</keyword>
<keyword id="KW-0460">Magnesium</keyword>
<keyword id="KW-0479">Metal-binding</keyword>
<keyword id="KW-0547">Nucleotide-binding</keyword>
<keyword id="KW-1185">Reference proteome</keyword>
<comment type="function">
    <text evidence="6 8">Involved in the catabolism of monoamine ethanolamine. Catalyzes the ATP-dependent gamma-glutamylation of ethanolamine. No activity with polyamines (PubMed:31113893). No complementation of the L-glutamine auxotrophy of an E.coli glnA mutant (PubMed:16932908). Enables survival of S.coelicolor under high local environmental ethanolamine conditions. May play a role during starvation conditions to limit intracellular ethanolamine concentration, which in excess is toxic to the cells (PubMed:31113893).</text>
</comment>
<comment type="catalytic activity">
    <reaction evidence="8">
        <text>ethanolamine + L-glutamate + ATP = gamma-L-glutamylethanolamide + ADP + phosphate + H(+)</text>
        <dbReference type="Rhea" id="RHEA:73903"/>
        <dbReference type="ChEBI" id="CHEBI:15378"/>
        <dbReference type="ChEBI" id="CHEBI:29985"/>
        <dbReference type="ChEBI" id="CHEBI:30616"/>
        <dbReference type="ChEBI" id="CHEBI:43474"/>
        <dbReference type="ChEBI" id="CHEBI:57603"/>
        <dbReference type="ChEBI" id="CHEBI:193054"/>
        <dbReference type="ChEBI" id="CHEBI:456216"/>
    </reaction>
    <physiologicalReaction direction="left-to-right" evidence="8">
        <dbReference type="Rhea" id="RHEA:73904"/>
    </physiologicalReaction>
</comment>
<comment type="cofactor">
    <cofactor evidence="1">
        <name>Mg(2+)</name>
        <dbReference type="ChEBI" id="CHEBI:18420"/>
    </cofactor>
    <text evidence="1">Binds 2 Mg(2+) ions per subunit.</text>
</comment>
<comment type="activity regulation">
    <text evidence="8">Very slightly decreased activity with glutamine synthetase (GS) inhibitor methionine sulfoximine (MSO).</text>
</comment>
<comment type="biophysicochemical properties">
    <kinetics>
        <KM evidence="8">0.47 mM for ethanolamine</KM>
        <KM evidence="8">85.41 mM for glutamate</KM>
        <KM evidence="8">2.5 mM for ATP</KM>
    </kinetics>
</comment>
<comment type="pathway">
    <text evidence="8">Amine and polyamine degradation; ethanolamine degradation.</text>
</comment>
<comment type="induction">
    <text evidence="8 9">Expression is induced by ethanolamine and by N and C starvation conditions. Low expression in low ammonium with high glucose concentrations, and in high polyamine concentrations with sufficient glucose level (PubMed:31113893). Transcriptionally repressed by EpuRI (PubMed:31113893, PubMed:35409114).</text>
</comment>
<comment type="disruption phenotype">
    <text evidence="7 8 9">Strongly delayed growth on defined Evans agar supplemented with 25 mM ethanolamine as the sole nitrogen source. Growth defects showing no mycelial growth, only swollen and sporadic germinating spores in cells grown in defined liquid Evans medium supplemented with ethanolamine as the sole nitrogen source, but normal growth when supplemented with ammonium. Inhibited growth in complex medium supplemented with 25 mM ethanolamine as unable to utilize ethanolamine from the medium (PubMed:31113893). Normal growth on defined Evans agar supplemented with ammonium, nitrate, glutamate, glutamine, urea, putrescine, cadaverine, spermidine or spermine as a sole nitrogen source (PubMed:28487688, PubMed:35409114). Normal growth in complex LB medium supplemented with a mixture of 25 mM putrescine, 25 mM cadaverine, 25 mM spermidine and 25 mM spermine. No intracellular accumulation of polyamines (PubMed:35409114).</text>
</comment>
<comment type="biotechnology">
    <text evidence="14">Modifying the binding affinity of this protein via protein engineering could make it prefer ethylamine as a substrate instead of ethanolamine, resulting in efficacious and sustainable synthesis of theanine, a major aromatic compound of tea, highly valued for its beneficial properties.</text>
</comment>
<comment type="similarity">
    <text evidence="3 4 5">Belongs to the glutamine synthetase family.</text>
</comment>
<reference evidence="15 16" key="1">
    <citation type="journal article" date="2002" name="Nature">
        <title>Complete genome sequence of the model actinomycete Streptomyces coelicolor A3(2).</title>
        <authorList>
            <person name="Bentley S.D."/>
            <person name="Chater K.F."/>
            <person name="Cerdeno-Tarraga A.-M."/>
            <person name="Challis G.L."/>
            <person name="Thomson N.R."/>
            <person name="James K.D."/>
            <person name="Harris D.E."/>
            <person name="Quail M.A."/>
            <person name="Kieser H."/>
            <person name="Harper D."/>
            <person name="Bateman A."/>
            <person name="Brown S."/>
            <person name="Chandra G."/>
            <person name="Chen C.W."/>
            <person name="Collins M."/>
            <person name="Cronin A."/>
            <person name="Fraser A."/>
            <person name="Goble A."/>
            <person name="Hidalgo J."/>
            <person name="Hornsby T."/>
            <person name="Howarth S."/>
            <person name="Huang C.-H."/>
            <person name="Kieser T."/>
            <person name="Larke L."/>
            <person name="Murphy L.D."/>
            <person name="Oliver K."/>
            <person name="O'Neil S."/>
            <person name="Rabbinowitsch E."/>
            <person name="Rajandream M.A."/>
            <person name="Rutherford K.M."/>
            <person name="Rutter S."/>
            <person name="Seeger K."/>
            <person name="Saunders D."/>
            <person name="Sharp S."/>
            <person name="Squares R."/>
            <person name="Squares S."/>
            <person name="Taylor K."/>
            <person name="Warren T."/>
            <person name="Wietzorrek A."/>
            <person name="Woodward J.R."/>
            <person name="Barrell B.G."/>
            <person name="Parkhill J."/>
            <person name="Hopwood D.A."/>
        </authorList>
    </citation>
    <scope>NUCLEOTIDE SEQUENCE [LARGE SCALE GENOMIC DNA]</scope>
    <source>
        <strain evidence="16">ATCC BAA-471 / A3(2) / M145</strain>
    </source>
</reference>
<reference key="2">
    <citation type="journal article" date="2006" name="Arch. Microbiol.">
        <title>Investigation of the functional properties and regulation of three glutamine synthetase-like genes in Streptomyces coelicolor A3(2).</title>
        <authorList>
            <person name="Rexer H.U."/>
            <person name="Schaeberle T."/>
            <person name="Wohlleben W."/>
            <person name="Engels A."/>
        </authorList>
    </citation>
    <scope>FUNCTION</scope>
    <source>
        <strain evidence="10">ATCC BAA-471 / A3(2) / M145</strain>
    </source>
</reference>
<reference key="3">
    <citation type="journal article" date="2017" name="Front. Microbiol.">
        <title>Gamma-Glutamylpolyamine Synthetase GlnA3 Is Involved in the First Step of Polyamine Degradation Pathway in Streptomyces coelicolor M145.</title>
        <authorList>
            <person name="Krysenko S."/>
            <person name="Okoniewski N."/>
            <person name="Kulik A."/>
            <person name="Matthews A."/>
            <person name="Grimpo J."/>
            <person name="Wohlleben W."/>
            <person name="Bera A."/>
        </authorList>
    </citation>
    <scope>DISRUPTION PHENOTYPE</scope>
    <source>
        <strain evidence="11">ATCC BAA-471 / A3(2) / M145</strain>
    </source>
</reference>
<reference key="4">
    <citation type="journal article" date="2019" name="MBio">
        <title>Initial Metabolic Step of a Novel Ethanolamine Utilization Pathway and Its Regulation in Streptomyces coelicolor M145.</title>
        <authorList>
            <person name="Krysenko S."/>
            <person name="Matthews A."/>
            <person name="Okoniewski N."/>
            <person name="Kulik A."/>
            <person name="Girbas M.G."/>
            <person name="Tsypik O."/>
            <person name="Meyners C.S."/>
            <person name="Hausch F."/>
            <person name="Wohlleben W."/>
            <person name="Bera A."/>
        </authorList>
    </citation>
    <scope>FUNCTION</scope>
    <scope>CATALYTIC ACTIVITY</scope>
    <scope>SUBSTRATE SPECIFICITY</scope>
    <scope>ACTIVITY REGULATION</scope>
    <scope>BIOPHYSICOCHEMICAL PROPERTIES</scope>
    <scope>PATHWAY</scope>
    <scope>INDUCTION</scope>
    <scope>DISRUPTION PHENOTYPE</scope>
    <scope>BIOTECHNOLOGY</scope>
    <scope>3D-STRUCTURE MODELING</scope>
    <source>
        <strain evidence="12">ATCC BAA-471 / A3(2) / M145</strain>
    </source>
</reference>
<reference key="5">
    <citation type="journal article" date="2022" name="Int. J. Mol. Sci.">
        <title>A Second Gamma-Glutamylpolyamine Synthetase, GlnA2, Is Involved in Polyamine Catabolism in Streptomyces coelicolor.</title>
        <authorList>
            <person name="Krysenko S."/>
            <person name="Okoniewski N."/>
            <person name="Nentwich M."/>
            <person name="Matthews A."/>
            <person name="Baeuerle M."/>
            <person name="Zinser A."/>
            <person name="Busche T."/>
            <person name="Kulik A."/>
            <person name="Gursch S."/>
            <person name="Kemeny A."/>
            <person name="Bera A."/>
            <person name="Wohlleben W."/>
        </authorList>
    </citation>
    <scope>INDUCTION</scope>
    <scope>DISRUPTION PHENOTYPE</scope>
    <source>
        <strain evidence="13">ATCC BAA-471 / A3(2) / M145</strain>
    </source>
</reference>
<evidence type="ECO:0000250" key="1">
    <source>
        <dbReference type="UniProtKB" id="P12425"/>
    </source>
</evidence>
<evidence type="ECO:0000250" key="2">
    <source>
        <dbReference type="UniProtKB" id="P9WN39"/>
    </source>
</evidence>
<evidence type="ECO:0000255" key="3">
    <source>
        <dbReference type="PROSITE-ProRule" id="PRU01330"/>
    </source>
</evidence>
<evidence type="ECO:0000255" key="4">
    <source>
        <dbReference type="PROSITE-ProRule" id="PRU01331"/>
    </source>
</evidence>
<evidence type="ECO:0000255" key="5">
    <source>
        <dbReference type="RuleBase" id="RU000384"/>
    </source>
</evidence>
<evidence type="ECO:0000269" key="6">
    <source>
    </source>
</evidence>
<evidence type="ECO:0000269" key="7">
    <source>
    </source>
</evidence>
<evidence type="ECO:0000269" key="8">
    <source>
    </source>
</evidence>
<evidence type="ECO:0000269" key="9">
    <source>
    </source>
</evidence>
<evidence type="ECO:0000303" key="10">
    <source>
    </source>
</evidence>
<evidence type="ECO:0000303" key="11">
    <source>
    </source>
</evidence>
<evidence type="ECO:0000303" key="12">
    <source>
    </source>
</evidence>
<evidence type="ECO:0000303" key="13">
    <source>
    </source>
</evidence>
<evidence type="ECO:0000305" key="14">
    <source>
    </source>
</evidence>
<evidence type="ECO:0000312" key="15">
    <source>
        <dbReference type="EMBL" id="CAA20824.1"/>
    </source>
</evidence>
<evidence type="ECO:0000312" key="16">
    <source>
        <dbReference type="Proteomes" id="UP000001973"/>
    </source>
</evidence>
<protein>
    <recommendedName>
        <fullName evidence="12 13">Gamma-glutamylethanolamide synthetase GlnA4</fullName>
        <ecNumber evidence="8">6.3.1.-</ecNumber>
    </recommendedName>
</protein>
<feature type="chain" id="PRO_0000456964" description="Gamma-glutamylethanolamide synthetase GlnA4">
    <location>
        <begin position="1"/>
        <end position="462"/>
    </location>
</feature>
<feature type="domain" description="GS beta-grasp" evidence="3">
    <location>
        <begin position="30"/>
        <end position="126"/>
    </location>
</feature>
<feature type="domain" description="GS catalytic" evidence="4">
    <location>
        <begin position="133"/>
        <end position="462"/>
    </location>
</feature>
<feature type="binding site" evidence="1">
    <location>
        <position position="156"/>
    </location>
    <ligand>
        <name>Mg(2+)</name>
        <dbReference type="ChEBI" id="CHEBI:18420"/>
        <label>1</label>
    </ligand>
</feature>
<feature type="binding site" evidence="1">
    <location>
        <position position="158"/>
    </location>
    <ligand>
        <name>Mg(2+)</name>
        <dbReference type="ChEBI" id="CHEBI:18420"/>
        <label>2</label>
    </ligand>
</feature>
<feature type="binding site" evidence="2">
    <location>
        <position position="214"/>
    </location>
    <ligand>
        <name>ATP</name>
        <dbReference type="ChEBI" id="CHEBI:30616"/>
    </ligand>
</feature>
<feature type="binding site" evidence="1">
    <location>
        <position position="219"/>
    </location>
    <ligand>
        <name>Mg(2+)</name>
        <dbReference type="ChEBI" id="CHEBI:18420"/>
        <label>2</label>
    </ligand>
</feature>
<feature type="binding site" evidence="1">
    <location>
        <position position="226"/>
    </location>
    <ligand>
        <name>Mg(2+)</name>
        <dbReference type="ChEBI" id="CHEBI:18420"/>
        <label>2</label>
    </ligand>
</feature>
<feature type="binding site" evidence="1">
    <location>
        <position position="270"/>
    </location>
    <ligand>
        <name>L-glutamate</name>
        <dbReference type="ChEBI" id="CHEBI:29985"/>
    </ligand>
</feature>
<feature type="binding site" evidence="1">
    <location>
        <position position="274"/>
    </location>
    <ligand>
        <name>Mg(2+)</name>
        <dbReference type="ChEBI" id="CHEBI:18420"/>
        <label>1</label>
    </ligand>
</feature>
<feature type="binding site" evidence="2">
    <location>
        <begin position="276"/>
        <end position="278"/>
    </location>
    <ligand>
        <name>ATP</name>
        <dbReference type="ChEBI" id="CHEBI:30616"/>
    </ligand>
</feature>
<feature type="binding site" evidence="2">
    <location>
        <position position="325"/>
    </location>
    <ligand>
        <name>L-glutamate</name>
        <dbReference type="ChEBI" id="CHEBI:29985"/>
    </ligand>
</feature>
<feature type="binding site" evidence="2">
    <location>
        <position position="343"/>
    </location>
    <ligand>
        <name>ATP</name>
        <dbReference type="ChEBI" id="CHEBI:30616"/>
    </ligand>
</feature>
<feature type="binding site" evidence="2">
    <location>
        <position position="343"/>
    </location>
    <ligand>
        <name>L-glutamate</name>
        <dbReference type="ChEBI" id="CHEBI:29985"/>
    </ligand>
</feature>
<feature type="binding site" evidence="2">
    <location>
        <position position="348"/>
    </location>
    <ligand>
        <name>ATP</name>
        <dbReference type="ChEBI" id="CHEBI:30616"/>
    </ligand>
</feature>
<feature type="binding site" evidence="1">
    <location>
        <position position="359"/>
    </location>
    <ligand>
        <name>Mg(2+)</name>
        <dbReference type="ChEBI" id="CHEBI:18420"/>
        <label>1</label>
    </ligand>
</feature>
<feature type="binding site" evidence="2">
    <location>
        <position position="361"/>
    </location>
    <ligand>
        <name>L-glutamate</name>
        <dbReference type="ChEBI" id="CHEBI:29985"/>
    </ligand>
</feature>